<feature type="chain" id="PRO_0000169831" description="Translocation and assembly module subunit TamB">
    <location>
        <begin position="1"/>
        <end position="1298"/>
    </location>
</feature>
<feature type="topological domain" description="Cytoplasmic" evidence="1">
    <location>
        <begin position="1"/>
        <end position="27"/>
    </location>
</feature>
<feature type="transmembrane region" description="Helical; Signal-anchor for type II membrane protein" evidence="2">
    <location>
        <begin position="28"/>
        <end position="48"/>
    </location>
</feature>
<feature type="topological domain" description="Periplasmic" evidence="1">
    <location>
        <begin position="49"/>
        <end position="1298"/>
    </location>
</feature>
<proteinExistence type="evidence at protein level"/>
<accession>Q57523</accession>
<comment type="function">
    <text evidence="1">Component of the translocation and assembly module (TAM), which facilitates the insertion and assembly of specific beta-barrel proteins into the outer membrane.</text>
</comment>
<comment type="function">
    <text evidence="1">In addition, is involved in outer membrane lipid homeostasis (By similarity). Likely transports phospholipids between the inner membrane and the outer membrane (By similarity).</text>
</comment>
<comment type="subunit">
    <text evidence="1">Interacts with TamA to form the translocation and assembly module (TAM).</text>
</comment>
<comment type="subcellular location">
    <subcellularLocation>
        <location evidence="1">Cell inner membrane</location>
        <topology evidence="1">Single-pass membrane protein</topology>
        <orientation evidence="1">Periplasmic side</orientation>
    </subcellularLocation>
</comment>
<comment type="similarity">
    <text evidence="3">Belongs to the TamB family.</text>
</comment>
<organism>
    <name type="scientific">Haemophilus influenzae (strain ATCC 51907 / DSM 11121 / KW20 / Rd)</name>
    <dbReference type="NCBI Taxonomy" id="71421"/>
    <lineage>
        <taxon>Bacteria</taxon>
        <taxon>Pseudomonadati</taxon>
        <taxon>Pseudomonadota</taxon>
        <taxon>Gammaproteobacteria</taxon>
        <taxon>Pasteurellales</taxon>
        <taxon>Pasteurellaceae</taxon>
        <taxon>Haemophilus</taxon>
    </lineage>
</organism>
<reference key="1">
    <citation type="journal article" date="1995" name="Science">
        <title>Whole-genome random sequencing and assembly of Haemophilus influenzae Rd.</title>
        <authorList>
            <person name="Fleischmann R.D."/>
            <person name="Adams M.D."/>
            <person name="White O."/>
            <person name="Clayton R.A."/>
            <person name="Kirkness E.F."/>
            <person name="Kerlavage A.R."/>
            <person name="Bult C.J."/>
            <person name="Tomb J.-F."/>
            <person name="Dougherty B.A."/>
            <person name="Merrick J.M."/>
            <person name="McKenney K."/>
            <person name="Sutton G.G."/>
            <person name="FitzHugh W."/>
            <person name="Fields C.A."/>
            <person name="Gocayne J.D."/>
            <person name="Scott J.D."/>
            <person name="Shirley R."/>
            <person name="Liu L.-I."/>
            <person name="Glodek A."/>
            <person name="Kelley J.M."/>
            <person name="Weidman J.F."/>
            <person name="Phillips C.A."/>
            <person name="Spriggs T."/>
            <person name="Hedblom E."/>
            <person name="Cotton M.D."/>
            <person name="Utterback T.R."/>
            <person name="Hanna M.C."/>
            <person name="Nguyen D.T."/>
            <person name="Saudek D.M."/>
            <person name="Brandon R.C."/>
            <person name="Fine L.D."/>
            <person name="Fritchman J.L."/>
            <person name="Fuhrmann J.L."/>
            <person name="Geoghagen N.S.M."/>
            <person name="Gnehm C.L."/>
            <person name="McDonald L.A."/>
            <person name="Small K.V."/>
            <person name="Fraser C.M."/>
            <person name="Smith H.O."/>
            <person name="Venter J.C."/>
        </authorList>
    </citation>
    <scope>NUCLEOTIDE SEQUENCE [LARGE SCALE GENOMIC DNA]</scope>
    <source>
        <strain>ATCC 51907 / DSM 11121 / KW20 / Rd</strain>
    </source>
</reference>
<reference key="2">
    <citation type="journal article" date="2000" name="Electrophoresis">
        <title>Two-dimensional map of the proteome of Haemophilus influenzae.</title>
        <authorList>
            <person name="Langen H."/>
            <person name="Takacs B."/>
            <person name="Evers S."/>
            <person name="Berndt P."/>
            <person name="Lahm H.W."/>
            <person name="Wipf B."/>
            <person name="Gray C."/>
            <person name="Fountoulakis M."/>
        </authorList>
    </citation>
    <scope>IDENTIFICATION BY MASS SPECTROMETRY</scope>
    <source>
        <strain>ATCC 51907 / DSM 11121 / KW20 / Rd</strain>
    </source>
</reference>
<dbReference type="EMBL" id="L42023">
    <property type="protein sequence ID" value="AAC22356.1"/>
    <property type="molecule type" value="Genomic_DNA"/>
</dbReference>
<dbReference type="PIR" id="A64157">
    <property type="entry name" value="A64157"/>
</dbReference>
<dbReference type="RefSeq" id="NP_438856.1">
    <property type="nucleotide sequence ID" value="NC_000907.1"/>
</dbReference>
<dbReference type="SMR" id="Q57523"/>
<dbReference type="STRING" id="71421.HI_0696"/>
<dbReference type="EnsemblBacteria" id="AAC22356">
    <property type="protein sequence ID" value="AAC22356"/>
    <property type="gene ID" value="HI_0696"/>
</dbReference>
<dbReference type="KEGG" id="hin:HI_0696"/>
<dbReference type="PATRIC" id="fig|71421.8.peg.728"/>
<dbReference type="eggNOG" id="COG2911">
    <property type="taxonomic scope" value="Bacteria"/>
</dbReference>
<dbReference type="HOGENOM" id="CLU_002338_0_1_6"/>
<dbReference type="OrthoDB" id="5555605at2"/>
<dbReference type="PhylomeDB" id="Q57523"/>
<dbReference type="BioCyc" id="HINF71421:G1GJ1-731-MONOMER"/>
<dbReference type="Proteomes" id="UP000000579">
    <property type="component" value="Chromosome"/>
</dbReference>
<dbReference type="GO" id="GO:0005886">
    <property type="term" value="C:plasma membrane"/>
    <property type="evidence" value="ECO:0000318"/>
    <property type="project" value="GO_Central"/>
</dbReference>
<dbReference type="GO" id="GO:0097347">
    <property type="term" value="C:TAM protein secretion complex"/>
    <property type="evidence" value="ECO:0000318"/>
    <property type="project" value="GO_Central"/>
</dbReference>
<dbReference type="GO" id="GO:0009306">
    <property type="term" value="P:protein secretion"/>
    <property type="evidence" value="ECO:0000318"/>
    <property type="project" value="GO_Central"/>
</dbReference>
<dbReference type="InterPro" id="IPR007452">
    <property type="entry name" value="TamB"/>
</dbReference>
<dbReference type="PANTHER" id="PTHR36985">
    <property type="entry name" value="TRANSLOCATION AND ASSEMBLY MODULE SUBUNIT TAMB"/>
    <property type="match status" value="1"/>
</dbReference>
<dbReference type="PANTHER" id="PTHR36985:SF1">
    <property type="entry name" value="TRANSLOCATION AND ASSEMBLY MODULE SUBUNIT TAMB"/>
    <property type="match status" value="1"/>
</dbReference>
<dbReference type="Pfam" id="PF04357">
    <property type="entry name" value="TamB"/>
    <property type="match status" value="1"/>
</dbReference>
<sequence>MTEQIQPSETSPKSPEKPNKKHWVRKAVCIGSAVILVPVLGVAGALSFDAGQKSLIQLVDKMLDSFSVEQVEGGLQNGLVLKNVRYQTAGIETHIAQARLQLDFGCLFSREVCLRDFTLNKPTIAINTALLPPSAPDNSKSGSMKRISLPISINAENLVMQDLSVNIDQTSITLGNFKSAVSLNNEKGLTIAPTEINDISVIAKKLSEVKSEPKAEQPNKPVDWAAIEQSLTPAFLGNVSEIILPFDLHIPEISGKNWQYQAVNEKGETLQSVEMSSLIAQADTVDNQLQLQKLAVESSLGNLSSQGKLQLDGDMPLDLTLKSHLEPLKSDGKEILPASDVDLTLSGSLKKSTALSLKTKGVLDAELNGNVQLAQDKMPLNLTLNVAKGQYTFVNTMTPLKINDVTLKLTGDLLNYHAELKGDVAGMNYIPASQVELNADGKLYEVTVNKLGIDSLDGKSEFVGNANWKNGANWDIQADLEKMNIAFFVPVMPATLSGKLHSRGFAGSQGWQVEVPVADLNGMLSAKPISLKGSATLNQNVLLTVPDLQIKYGENYLKASGVLDDHSDFALDINAPNLRGLWSDLKGRVKGRVAISGQITTPNLDLDLTSSNLHLQGFQLAKASIKGHINNASLSSGKLNIKAEQLHYGGNIKLHLLDLDLSGDEQNHKLILKSQGEPVAANLQINGHFDRTLEQWKGTISQVKFETPIGDVKSNQAIAVSYDNKQTQANIASHCWQNTDVELCFPQAFNAGKQGNIPFQFKRVNLDLVNKLIEQNSLKGNLQVQGNVAWFTDKPFQFTANVDGNHLAFSQKLDYRTFKLYIPKLTLNADIQNNNLVLKTDINVHNQGRIVGDIHLNDLAKNRQLGGTLAIERLNLSIANQLLTSGESVNGEVVSKLSFGGNLEKPLLNGDFNIRNIRTKLKSMPVNITDGDIALRFNDNRSTLQGKIKTVDSHLNLTGRANWANIEHWTTELNAQANNFNVDIPSMAKLRFSPNITIKANPKELNLSGTVDIPWARIKIDSLPDTAEPVSEDEVILNGPHKSKEELIKREFAAKTKSGMEIRSDLRINIGKDVSLDAYGLKTNLDGLLSVKQDKGNLGLFGQINLTKGRYASFGQDLLIRKGLISFSGQATQPTLNIEAIRNPETMEDSKITAGVRVIGIADSPEVTIFSEPSKPQDQALSYLLTGRSLESSGEVGSTGSVGAALIGLGISKSGKLVGSIGEVFGIQDLNLGTSGVGDKSKVTVSGNITNRLQIKYGVGLFDGLAEVTLRYRLMPQLYFQSVSSTNQVFDLLYKFEF</sequence>
<keyword id="KW-0997">Cell inner membrane</keyword>
<keyword id="KW-1003">Cell membrane</keyword>
<keyword id="KW-0472">Membrane</keyword>
<keyword id="KW-1185">Reference proteome</keyword>
<keyword id="KW-0735">Signal-anchor</keyword>
<keyword id="KW-0812">Transmembrane</keyword>
<keyword id="KW-1133">Transmembrane helix</keyword>
<gene>
    <name type="primary">tamB</name>
    <name type="ordered locus">HI_0696</name>
</gene>
<name>TAMB_HAEIN</name>
<protein>
    <recommendedName>
        <fullName evidence="1">Translocation and assembly module subunit TamB</fullName>
    </recommendedName>
    <alternativeName>
        <fullName>Autotransporter assembly factor TamB</fullName>
    </alternativeName>
    <alternativeName>
        <fullName evidence="1">Intermembrane phospholipid transporter TamB</fullName>
    </alternativeName>
</protein>
<evidence type="ECO:0000250" key="1">
    <source>
        <dbReference type="UniProtKB" id="P39321"/>
    </source>
</evidence>
<evidence type="ECO:0000255" key="2"/>
<evidence type="ECO:0000305" key="3"/>